<protein>
    <recommendedName>
        <fullName>Argininosuccinate synthase</fullName>
        <ecNumber>6.3.4.5</ecNumber>
    </recommendedName>
    <alternativeName>
        <fullName>Citrulline--aspartate ligase</fullName>
    </alternativeName>
</protein>
<evidence type="ECO:0000250" key="1"/>
<evidence type="ECO:0000256" key="2">
    <source>
        <dbReference type="SAM" id="MobiDB-lite"/>
    </source>
</evidence>
<evidence type="ECO:0000305" key="3"/>
<comment type="catalytic activity">
    <reaction>
        <text>L-citrulline + L-aspartate + ATP = 2-(N(omega)-L-arginino)succinate + AMP + diphosphate + H(+)</text>
        <dbReference type="Rhea" id="RHEA:10932"/>
        <dbReference type="ChEBI" id="CHEBI:15378"/>
        <dbReference type="ChEBI" id="CHEBI:29991"/>
        <dbReference type="ChEBI" id="CHEBI:30616"/>
        <dbReference type="ChEBI" id="CHEBI:33019"/>
        <dbReference type="ChEBI" id="CHEBI:57472"/>
        <dbReference type="ChEBI" id="CHEBI:57743"/>
        <dbReference type="ChEBI" id="CHEBI:456215"/>
        <dbReference type="EC" id="6.3.4.5"/>
    </reaction>
</comment>
<comment type="pathway">
    <text>Amino-acid biosynthesis; L-arginine biosynthesis; L-arginine from L-ornithine and carbamoyl phosphate: step 2/3.</text>
</comment>
<comment type="subunit">
    <text evidence="1">Homotetramer.</text>
</comment>
<comment type="subcellular location">
    <subcellularLocation>
        <location evidence="1">Cytoplasm</location>
    </subcellularLocation>
</comment>
<comment type="similarity">
    <text evidence="3">Belongs to the argininosuccinate synthase family. Type 2 subfamily.</text>
</comment>
<comment type="sequence caution" evidence="3">
    <conflict type="erroneous initiation">
        <sequence resource="EMBL-CDS" id="AAM86150"/>
    </conflict>
</comment>
<comment type="sequence caution" evidence="3">
    <conflict type="erroneous initiation">
        <sequence resource="EMBL-CDS" id="AAS61697"/>
    </conflict>
</comment>
<name>ASSY_YERPE</name>
<sequence>MTTILKHLPINQRVGIAFSGGLDTSAALLWMQKKGAIPYAYTANLGQPDEEDYEAIPRKAMEYGAEKARLIDCRKQLVAEGIAAIQCGAFHNTTAGVTYFNTTPLGRAVTGTMLVAAMKEDDVNIWGDGSTYKGNDIERFYRYGLLTNAELKIYKPWLDTDFIDELGGRHEMSEFMIQSGFDYKMSTEKAYSTDSNMLGATHEAKDLEFLNSSVKIVNPIMGVKFWDENVVVKAEEVTVRFERGYPVALNGVVFDDSVELMMEANRIGGRHGLGMSDQIENRIIEAKSRGIYEAPGMALLHIAYERLLTGIHNEDTIEQYHANGRVLGRLLYQGRWFDPQALMLRDSIQRWVASEITGEVTLELRRGNDYSILNTVSDNLTYKPERLTMEKGDSVFSPDDRIGQLTMRNLDITDTREKLFNYVETGLLTSSAATGLPQVDNNNLSSGRGLQDKRQ</sequence>
<proteinExistence type="inferred from homology"/>
<accession>Q8ZFV7</accession>
<accession>Q0WGK5</accession>
<organism>
    <name type="scientific">Yersinia pestis</name>
    <dbReference type="NCBI Taxonomy" id="632"/>
    <lineage>
        <taxon>Bacteria</taxon>
        <taxon>Pseudomonadati</taxon>
        <taxon>Pseudomonadota</taxon>
        <taxon>Gammaproteobacteria</taxon>
        <taxon>Enterobacterales</taxon>
        <taxon>Yersiniaceae</taxon>
        <taxon>Yersinia</taxon>
    </lineage>
</organism>
<keyword id="KW-0028">Amino-acid biosynthesis</keyword>
<keyword id="KW-0055">Arginine biosynthesis</keyword>
<keyword id="KW-0067">ATP-binding</keyword>
<keyword id="KW-0963">Cytoplasm</keyword>
<keyword id="KW-0436">Ligase</keyword>
<keyword id="KW-0547">Nucleotide-binding</keyword>
<keyword id="KW-1185">Reference proteome</keyword>
<gene>
    <name type="primary">argG</name>
    <name type="ordered locus">YPO1570</name>
    <name type="ordered locus">y2595</name>
    <name type="ordered locus">YP_1458</name>
</gene>
<dbReference type="EC" id="6.3.4.5"/>
<dbReference type="EMBL" id="AL590842">
    <property type="protein sequence ID" value="CAL20215.1"/>
    <property type="molecule type" value="Genomic_DNA"/>
</dbReference>
<dbReference type="EMBL" id="AE009952">
    <property type="protein sequence ID" value="AAM86150.1"/>
    <property type="status" value="ALT_INIT"/>
    <property type="molecule type" value="Genomic_DNA"/>
</dbReference>
<dbReference type="EMBL" id="AE017042">
    <property type="protein sequence ID" value="AAS61697.1"/>
    <property type="status" value="ALT_INIT"/>
    <property type="molecule type" value="Genomic_DNA"/>
</dbReference>
<dbReference type="PIR" id="AE0191">
    <property type="entry name" value="AE0191"/>
</dbReference>
<dbReference type="RefSeq" id="WP_002211920.1">
    <property type="nucleotide sequence ID" value="NZ_WUCM01000068.1"/>
</dbReference>
<dbReference type="RefSeq" id="YP_002346583.1">
    <property type="nucleotide sequence ID" value="NC_003143.1"/>
</dbReference>
<dbReference type="SMR" id="Q8ZFV7"/>
<dbReference type="IntAct" id="Q8ZFV7">
    <property type="interactions" value="1"/>
</dbReference>
<dbReference type="STRING" id="214092.YPO1570"/>
<dbReference type="PaxDb" id="214092-YPO1570"/>
<dbReference type="DNASU" id="1147542"/>
<dbReference type="EnsemblBacteria" id="AAS61697">
    <property type="protein sequence ID" value="AAS61697"/>
    <property type="gene ID" value="YP_1458"/>
</dbReference>
<dbReference type="GeneID" id="96665184"/>
<dbReference type="KEGG" id="ype:YPO1570"/>
<dbReference type="KEGG" id="ypk:y2595"/>
<dbReference type="KEGG" id="ypm:YP_1458"/>
<dbReference type="PATRIC" id="fig|214092.21.peg.1911"/>
<dbReference type="eggNOG" id="COG0137">
    <property type="taxonomic scope" value="Bacteria"/>
</dbReference>
<dbReference type="HOGENOM" id="CLU_032784_4_1_6"/>
<dbReference type="OMA" id="WRWTVSP"/>
<dbReference type="OrthoDB" id="9801641at2"/>
<dbReference type="UniPathway" id="UPA00068">
    <property type="reaction ID" value="UER00113"/>
</dbReference>
<dbReference type="Proteomes" id="UP000000815">
    <property type="component" value="Chromosome"/>
</dbReference>
<dbReference type="Proteomes" id="UP000001019">
    <property type="component" value="Chromosome"/>
</dbReference>
<dbReference type="Proteomes" id="UP000002490">
    <property type="component" value="Chromosome"/>
</dbReference>
<dbReference type="GO" id="GO:0005737">
    <property type="term" value="C:cytoplasm"/>
    <property type="evidence" value="ECO:0000318"/>
    <property type="project" value="GO_Central"/>
</dbReference>
<dbReference type="GO" id="GO:0004055">
    <property type="term" value="F:argininosuccinate synthase activity"/>
    <property type="evidence" value="ECO:0000318"/>
    <property type="project" value="GO_Central"/>
</dbReference>
<dbReference type="GO" id="GO:0005524">
    <property type="term" value="F:ATP binding"/>
    <property type="evidence" value="ECO:0007669"/>
    <property type="project" value="UniProtKB-UniRule"/>
</dbReference>
<dbReference type="GO" id="GO:0042803">
    <property type="term" value="F:protein homodimerization activity"/>
    <property type="evidence" value="ECO:0007669"/>
    <property type="project" value="InterPro"/>
</dbReference>
<dbReference type="GO" id="GO:0000053">
    <property type="term" value="P:argininosuccinate metabolic process"/>
    <property type="evidence" value="ECO:0000318"/>
    <property type="project" value="GO_Central"/>
</dbReference>
<dbReference type="GO" id="GO:0006526">
    <property type="term" value="P:L-arginine biosynthetic process"/>
    <property type="evidence" value="ECO:0000318"/>
    <property type="project" value="GO_Central"/>
</dbReference>
<dbReference type="GO" id="GO:0000050">
    <property type="term" value="P:urea cycle"/>
    <property type="evidence" value="ECO:0000318"/>
    <property type="project" value="GO_Central"/>
</dbReference>
<dbReference type="CDD" id="cd01999">
    <property type="entry name" value="ASS"/>
    <property type="match status" value="1"/>
</dbReference>
<dbReference type="FunFam" id="1.10.287.400:FF:000001">
    <property type="entry name" value="Argininosuccinate synthase"/>
    <property type="match status" value="1"/>
</dbReference>
<dbReference type="Gene3D" id="1.10.287.400">
    <property type="match status" value="1"/>
</dbReference>
<dbReference type="Gene3D" id="3.90.1260.10">
    <property type="entry name" value="Argininosuccinate synthetase, chain A, domain 2"/>
    <property type="match status" value="1"/>
</dbReference>
<dbReference type="Gene3D" id="3.40.50.620">
    <property type="entry name" value="HUPs"/>
    <property type="match status" value="1"/>
</dbReference>
<dbReference type="HAMAP" id="MF_00581">
    <property type="entry name" value="Arg_succ_synth_type2"/>
    <property type="match status" value="1"/>
</dbReference>
<dbReference type="InterPro" id="IPR023437">
    <property type="entry name" value="Arg_succ_synth_type2_subfam"/>
</dbReference>
<dbReference type="InterPro" id="IPR048268">
    <property type="entry name" value="Arginosuc_syn_C"/>
</dbReference>
<dbReference type="InterPro" id="IPR048267">
    <property type="entry name" value="Arginosuc_syn_N"/>
</dbReference>
<dbReference type="InterPro" id="IPR001518">
    <property type="entry name" value="Arginosuc_synth"/>
</dbReference>
<dbReference type="InterPro" id="IPR018223">
    <property type="entry name" value="Arginosuc_synth_CS"/>
</dbReference>
<dbReference type="InterPro" id="IPR023434">
    <property type="entry name" value="Arginosuc_synth_type_1_subfam"/>
</dbReference>
<dbReference type="InterPro" id="IPR024074">
    <property type="entry name" value="AS_cat/multimer_dom_body"/>
</dbReference>
<dbReference type="InterPro" id="IPR024073">
    <property type="entry name" value="AS_multimer_C_tail"/>
</dbReference>
<dbReference type="InterPro" id="IPR014729">
    <property type="entry name" value="Rossmann-like_a/b/a_fold"/>
</dbReference>
<dbReference type="NCBIfam" id="TIGR00032">
    <property type="entry name" value="argG"/>
    <property type="match status" value="1"/>
</dbReference>
<dbReference type="NCBIfam" id="NF003779">
    <property type="entry name" value="PRK05370.1"/>
    <property type="match status" value="1"/>
</dbReference>
<dbReference type="PANTHER" id="PTHR11587">
    <property type="entry name" value="ARGININOSUCCINATE SYNTHASE"/>
    <property type="match status" value="1"/>
</dbReference>
<dbReference type="PANTHER" id="PTHR11587:SF2">
    <property type="entry name" value="ARGININOSUCCINATE SYNTHASE"/>
    <property type="match status" value="1"/>
</dbReference>
<dbReference type="Pfam" id="PF20979">
    <property type="entry name" value="Arginosuc_syn_C"/>
    <property type="match status" value="1"/>
</dbReference>
<dbReference type="Pfam" id="PF00764">
    <property type="entry name" value="Arginosuc_synth"/>
    <property type="match status" value="1"/>
</dbReference>
<dbReference type="SUPFAM" id="SSF52402">
    <property type="entry name" value="Adenine nucleotide alpha hydrolases-like"/>
    <property type="match status" value="1"/>
</dbReference>
<dbReference type="SUPFAM" id="SSF69864">
    <property type="entry name" value="Argininosuccinate synthetase, C-terminal domain"/>
    <property type="match status" value="1"/>
</dbReference>
<dbReference type="PROSITE" id="PS00564">
    <property type="entry name" value="ARGININOSUCCIN_SYN_1"/>
    <property type="match status" value="1"/>
</dbReference>
<dbReference type="PROSITE" id="PS00565">
    <property type="entry name" value="ARGININOSUCCIN_SYN_2"/>
    <property type="match status" value="1"/>
</dbReference>
<feature type="initiator methionine" description="Removed" evidence="1">
    <location>
        <position position="1"/>
    </location>
</feature>
<feature type="chain" id="PRO_0000148710" description="Argininosuccinate synthase">
    <location>
        <begin position="2"/>
        <end position="455"/>
    </location>
</feature>
<feature type="region of interest" description="Disordered" evidence="2">
    <location>
        <begin position="434"/>
        <end position="455"/>
    </location>
</feature>
<feature type="compositionally biased region" description="Polar residues" evidence="2">
    <location>
        <begin position="434"/>
        <end position="448"/>
    </location>
</feature>
<feature type="binding site" evidence="1">
    <location>
        <begin position="17"/>
        <end position="25"/>
    </location>
    <ligand>
        <name>ATP</name>
        <dbReference type="ChEBI" id="CHEBI:30616"/>
    </ligand>
</feature>
<feature type="binding site" evidence="1">
    <location>
        <position position="43"/>
    </location>
    <ligand>
        <name>ATP</name>
        <dbReference type="ChEBI" id="CHEBI:30616"/>
    </ligand>
</feature>
<feature type="binding site" evidence="1">
    <location>
        <position position="99"/>
    </location>
    <ligand>
        <name>L-citrulline</name>
        <dbReference type="ChEBI" id="CHEBI:57743"/>
    </ligand>
</feature>
<feature type="binding site" evidence="1">
    <location>
        <position position="129"/>
    </location>
    <ligand>
        <name>ATP</name>
        <dbReference type="ChEBI" id="CHEBI:30616"/>
    </ligand>
</feature>
<feature type="binding site" evidence="1">
    <location>
        <position position="131"/>
    </location>
    <ligand>
        <name>ATP</name>
        <dbReference type="ChEBI" id="CHEBI:30616"/>
    </ligand>
</feature>
<feature type="binding site" evidence="1">
    <location>
        <position position="131"/>
    </location>
    <ligand>
        <name>L-aspartate</name>
        <dbReference type="ChEBI" id="CHEBI:29991"/>
    </ligand>
</feature>
<feature type="binding site" evidence="1">
    <location>
        <position position="135"/>
    </location>
    <ligand>
        <name>L-aspartate</name>
        <dbReference type="ChEBI" id="CHEBI:29991"/>
    </ligand>
</feature>
<feature type="binding site" evidence="1">
    <location>
        <position position="135"/>
    </location>
    <ligand>
        <name>L-citrulline</name>
        <dbReference type="ChEBI" id="CHEBI:57743"/>
    </ligand>
</feature>
<feature type="binding site" evidence="1">
    <location>
        <position position="136"/>
    </location>
    <ligand>
        <name>ATP</name>
        <dbReference type="ChEBI" id="CHEBI:30616"/>
    </ligand>
</feature>
<feature type="binding site" evidence="1">
    <location>
        <position position="136"/>
    </location>
    <ligand>
        <name>L-aspartate</name>
        <dbReference type="ChEBI" id="CHEBI:29991"/>
    </ligand>
</feature>
<feature type="binding site" evidence="1">
    <location>
        <position position="139"/>
    </location>
    <ligand>
        <name>L-citrulline</name>
        <dbReference type="ChEBI" id="CHEBI:57743"/>
    </ligand>
</feature>
<feature type="binding site" evidence="1">
    <location>
        <position position="192"/>
    </location>
    <ligand>
        <name>L-citrulline</name>
        <dbReference type="ChEBI" id="CHEBI:57743"/>
    </ligand>
</feature>
<feature type="binding site" evidence="1">
    <location>
        <position position="194"/>
    </location>
    <ligand>
        <name>ATP</name>
        <dbReference type="ChEBI" id="CHEBI:30616"/>
    </ligand>
</feature>
<feature type="binding site" evidence="1">
    <location>
        <position position="201"/>
    </location>
    <ligand>
        <name>L-citrulline</name>
        <dbReference type="ChEBI" id="CHEBI:57743"/>
    </ligand>
</feature>
<feature type="binding site" evidence="1">
    <location>
        <position position="203"/>
    </location>
    <ligand>
        <name>L-citrulline</name>
        <dbReference type="ChEBI" id="CHEBI:57743"/>
    </ligand>
</feature>
<feature type="binding site" evidence="1">
    <location>
        <position position="280"/>
    </location>
    <ligand>
        <name>L-citrulline</name>
        <dbReference type="ChEBI" id="CHEBI:57743"/>
    </ligand>
</feature>
<reference key="1">
    <citation type="journal article" date="2001" name="Nature">
        <title>Genome sequence of Yersinia pestis, the causative agent of plague.</title>
        <authorList>
            <person name="Parkhill J."/>
            <person name="Wren B.W."/>
            <person name="Thomson N.R."/>
            <person name="Titball R.W."/>
            <person name="Holden M.T.G."/>
            <person name="Prentice M.B."/>
            <person name="Sebaihia M."/>
            <person name="James K.D."/>
            <person name="Churcher C.M."/>
            <person name="Mungall K.L."/>
            <person name="Baker S."/>
            <person name="Basham D."/>
            <person name="Bentley S.D."/>
            <person name="Brooks K."/>
            <person name="Cerdeno-Tarraga A.-M."/>
            <person name="Chillingworth T."/>
            <person name="Cronin A."/>
            <person name="Davies R.M."/>
            <person name="Davis P."/>
            <person name="Dougan G."/>
            <person name="Feltwell T."/>
            <person name="Hamlin N."/>
            <person name="Holroyd S."/>
            <person name="Jagels K."/>
            <person name="Karlyshev A.V."/>
            <person name="Leather S."/>
            <person name="Moule S."/>
            <person name="Oyston P.C.F."/>
            <person name="Quail M.A."/>
            <person name="Rutherford K.M."/>
            <person name="Simmonds M."/>
            <person name="Skelton J."/>
            <person name="Stevens K."/>
            <person name="Whitehead S."/>
            <person name="Barrell B.G."/>
        </authorList>
    </citation>
    <scope>NUCLEOTIDE SEQUENCE [LARGE SCALE GENOMIC DNA]</scope>
    <source>
        <strain>CO-92 / Biovar Orientalis</strain>
    </source>
</reference>
<reference key="2">
    <citation type="journal article" date="2002" name="J. Bacteriol.">
        <title>Genome sequence of Yersinia pestis KIM.</title>
        <authorList>
            <person name="Deng W."/>
            <person name="Burland V."/>
            <person name="Plunkett G. III"/>
            <person name="Boutin A."/>
            <person name="Mayhew G.F."/>
            <person name="Liss P."/>
            <person name="Perna N.T."/>
            <person name="Rose D.J."/>
            <person name="Mau B."/>
            <person name="Zhou S."/>
            <person name="Schwartz D.C."/>
            <person name="Fetherston J.D."/>
            <person name="Lindler L.E."/>
            <person name="Brubaker R.R."/>
            <person name="Plano G.V."/>
            <person name="Straley S.C."/>
            <person name="McDonough K.A."/>
            <person name="Nilles M.L."/>
            <person name="Matson J.S."/>
            <person name="Blattner F.R."/>
            <person name="Perry R.D."/>
        </authorList>
    </citation>
    <scope>NUCLEOTIDE SEQUENCE [LARGE SCALE GENOMIC DNA]</scope>
    <source>
        <strain>KIM10+ / Biovar Mediaevalis</strain>
    </source>
</reference>
<reference key="3">
    <citation type="journal article" date="2004" name="DNA Res.">
        <title>Complete genome sequence of Yersinia pestis strain 91001, an isolate avirulent to humans.</title>
        <authorList>
            <person name="Song Y."/>
            <person name="Tong Z."/>
            <person name="Wang J."/>
            <person name="Wang L."/>
            <person name="Guo Z."/>
            <person name="Han Y."/>
            <person name="Zhang J."/>
            <person name="Pei D."/>
            <person name="Zhou D."/>
            <person name="Qin H."/>
            <person name="Pang X."/>
            <person name="Han Y."/>
            <person name="Zhai J."/>
            <person name="Li M."/>
            <person name="Cui B."/>
            <person name="Qi Z."/>
            <person name="Jin L."/>
            <person name="Dai R."/>
            <person name="Chen F."/>
            <person name="Li S."/>
            <person name="Ye C."/>
            <person name="Du Z."/>
            <person name="Lin W."/>
            <person name="Wang J."/>
            <person name="Yu J."/>
            <person name="Yang H."/>
            <person name="Wang J."/>
            <person name="Huang P."/>
            <person name="Yang R."/>
        </authorList>
    </citation>
    <scope>NUCLEOTIDE SEQUENCE [LARGE SCALE GENOMIC DNA]</scope>
    <source>
        <strain>91001 / Biovar Mediaevalis</strain>
    </source>
</reference>